<feature type="chain" id="PRO_0000444718" description="PR domain zinc finger protein 15">
    <location>
        <begin position="1"/>
        <end position="1174"/>
    </location>
</feature>
<feature type="domain" description="SET" evidence="3">
    <location>
        <begin position="75"/>
        <end position="185"/>
    </location>
</feature>
<feature type="zinc finger region" description="C2H2-type 1" evidence="2">
    <location>
        <begin position="402"/>
        <end position="424"/>
    </location>
</feature>
<feature type="zinc finger region" description="C2H2-type 2" evidence="2">
    <location>
        <begin position="434"/>
        <end position="457"/>
    </location>
</feature>
<feature type="zinc finger region" description="C2H2-type 3; degenerate" evidence="2">
    <location>
        <begin position="468"/>
        <end position="486"/>
    </location>
</feature>
<feature type="zinc finger region" description="C2H2-type 4" evidence="2">
    <location>
        <begin position="495"/>
        <end position="517"/>
    </location>
</feature>
<feature type="zinc finger region" description="C2H2-type 5" evidence="2">
    <location>
        <begin position="522"/>
        <end position="544"/>
    </location>
</feature>
<feature type="zinc finger region" description="C2H2-type 6" evidence="2">
    <location>
        <begin position="571"/>
        <end position="593"/>
    </location>
</feature>
<feature type="zinc finger region" description="C2H2-type 7" evidence="2">
    <location>
        <begin position="598"/>
        <end position="620"/>
    </location>
</feature>
<feature type="zinc finger region" description="C2H2-type 8" evidence="2">
    <location>
        <begin position="661"/>
        <end position="684"/>
    </location>
</feature>
<feature type="zinc finger region" description="C2H2-type 9" evidence="2">
    <location>
        <begin position="689"/>
        <end position="711"/>
    </location>
</feature>
<feature type="zinc finger region" description="C2H2-type 10" evidence="2">
    <location>
        <begin position="725"/>
        <end position="747"/>
    </location>
</feature>
<feature type="zinc finger region" description="C2H2-type 11" evidence="2">
    <location>
        <begin position="753"/>
        <end position="775"/>
    </location>
</feature>
<feature type="zinc finger region" description="C2H2-type 12" evidence="2">
    <location>
        <begin position="781"/>
        <end position="803"/>
    </location>
</feature>
<feature type="zinc finger region" description="C2H2-type 13" evidence="2">
    <location>
        <begin position="809"/>
        <end position="831"/>
    </location>
</feature>
<feature type="zinc finger region" description="C2H2-type 14" evidence="2">
    <location>
        <begin position="837"/>
        <end position="859"/>
    </location>
</feature>
<feature type="zinc finger region" description="C2H2-type 15" evidence="2">
    <location>
        <begin position="865"/>
        <end position="888"/>
    </location>
</feature>
<feature type="region of interest" description="Disordered" evidence="4">
    <location>
        <begin position="252"/>
        <end position="307"/>
    </location>
</feature>
<feature type="region of interest" description="Disordered" evidence="4">
    <location>
        <begin position="639"/>
        <end position="658"/>
    </location>
</feature>
<feature type="region of interest" description="Disordered" evidence="4">
    <location>
        <begin position="957"/>
        <end position="1007"/>
    </location>
</feature>
<feature type="region of interest" description="Disordered" evidence="4">
    <location>
        <begin position="1147"/>
        <end position="1174"/>
    </location>
</feature>
<feature type="compositionally biased region" description="Basic and acidic residues" evidence="4">
    <location>
        <begin position="261"/>
        <end position="271"/>
    </location>
</feature>
<feature type="compositionally biased region" description="Basic residues" evidence="4">
    <location>
        <begin position="292"/>
        <end position="304"/>
    </location>
</feature>
<feature type="compositionally biased region" description="Acidic residues" evidence="4">
    <location>
        <begin position="644"/>
        <end position="655"/>
    </location>
</feature>
<feature type="compositionally biased region" description="Basic residues" evidence="4">
    <location>
        <begin position="962"/>
        <end position="973"/>
    </location>
</feature>
<feature type="compositionally biased region" description="Low complexity" evidence="4">
    <location>
        <begin position="1154"/>
        <end position="1174"/>
    </location>
</feature>
<feature type="cross-link" description="Glycyl lysine isopeptide (Lys-Gly) (interchain with G-Cter in SUMO2)" evidence="1">
    <location>
        <position position="552"/>
    </location>
</feature>
<feature type="splice variant" id="VSP_059647" description="In isoform 2." evidence="6">
    <location>
        <begin position="1"/>
        <end position="26"/>
    </location>
</feature>
<feature type="sequence conflict" description="In Ref. 1; BAE26081." evidence="7" ref="1">
    <original>R</original>
    <variation>I</variation>
    <location>
        <position position="298"/>
    </location>
</feature>
<feature type="sequence conflict" description="In Ref. 1; BAE26081." evidence="7" ref="1">
    <original>R</original>
    <variation>L</variation>
    <location>
        <position position="609"/>
    </location>
</feature>
<dbReference type="EC" id="2.1.1.-" evidence="7"/>
<dbReference type="EMBL" id="AK144820">
    <property type="protein sequence ID" value="BAE26081.1"/>
    <property type="molecule type" value="mRNA"/>
</dbReference>
<dbReference type="EMBL" id="AC121560">
    <property type="status" value="NOT_ANNOTATED_CDS"/>
    <property type="molecule type" value="Genomic_DNA"/>
</dbReference>
<dbReference type="CCDS" id="CCDS49926.1">
    <molecule id="E9Q8T2-2"/>
</dbReference>
<dbReference type="CCDS" id="CCDS88979.1">
    <molecule id="E9Q8T2-2"/>
</dbReference>
<dbReference type="RefSeq" id="NP_001346006.1">
    <molecule id="E9Q8T2-2"/>
    <property type="nucleotide sequence ID" value="NM_001359077.2"/>
</dbReference>
<dbReference type="RefSeq" id="NP_001390355.1">
    <molecule id="E9Q8T2-2"/>
    <property type="nucleotide sequence ID" value="NM_001403426.1"/>
</dbReference>
<dbReference type="RefSeq" id="NP_659038.2">
    <molecule id="E9Q8T2-2"/>
    <property type="nucleotide sequence ID" value="NM_144789.2"/>
</dbReference>
<dbReference type="RefSeq" id="XP_006522932.1">
    <property type="nucleotide sequence ID" value="XM_006522869.3"/>
</dbReference>
<dbReference type="SMR" id="E9Q8T2"/>
<dbReference type="FunCoup" id="E9Q8T2">
    <property type="interactions" value="3697"/>
</dbReference>
<dbReference type="STRING" id="10090.ENSMUSP00000093533"/>
<dbReference type="GlyGen" id="E9Q8T2">
    <property type="glycosylation" value="1 site"/>
</dbReference>
<dbReference type="iPTMnet" id="E9Q8T2"/>
<dbReference type="PhosphoSitePlus" id="E9Q8T2"/>
<dbReference type="PaxDb" id="10090-ENSMUSP00000093533"/>
<dbReference type="ProteomicsDB" id="316119">
    <molecule id="E9Q8T2-1"/>
</dbReference>
<dbReference type="ProteomicsDB" id="363369"/>
<dbReference type="Pumba" id="E9Q8T2"/>
<dbReference type="Antibodypedia" id="9262">
    <property type="antibodies" value="102 antibodies from 20 providers"/>
</dbReference>
<dbReference type="Ensembl" id="ENSMUST00000095849.10">
    <molecule id="E9Q8T2-1"/>
    <property type="protein sequence ID" value="ENSMUSP00000093533.4"/>
    <property type="gene ID" value="ENSMUSG00000014039.19"/>
</dbReference>
<dbReference type="Ensembl" id="ENSMUST00000121584.8">
    <molecule id="E9Q8T2-2"/>
    <property type="protein sequence ID" value="ENSMUSP00000113791.2"/>
    <property type="gene ID" value="ENSMUSG00000014039.19"/>
</dbReference>
<dbReference type="GeneID" id="114604"/>
<dbReference type="KEGG" id="mmu:114604"/>
<dbReference type="UCSC" id="uc012ajc.1">
    <molecule id="E9Q8T2-1"/>
    <property type="organism name" value="mouse"/>
</dbReference>
<dbReference type="AGR" id="MGI:1930121"/>
<dbReference type="CTD" id="63977"/>
<dbReference type="MGI" id="MGI:1930121">
    <property type="gene designation" value="Prdm15"/>
</dbReference>
<dbReference type="VEuPathDB" id="HostDB:ENSMUSG00000014039"/>
<dbReference type="eggNOG" id="KOG1721">
    <property type="taxonomic scope" value="Eukaryota"/>
</dbReference>
<dbReference type="GeneTree" id="ENSGT00940000157890"/>
<dbReference type="HOGENOM" id="CLU_004140_2_0_1"/>
<dbReference type="InParanoid" id="E9Q8T2"/>
<dbReference type="OMA" id="ERGPWAC"/>
<dbReference type="OrthoDB" id="4748970at2759"/>
<dbReference type="PhylomeDB" id="E9Q8T2"/>
<dbReference type="TreeFam" id="TF331419"/>
<dbReference type="BioGRID-ORCS" id="114604">
    <property type="hits" value="8 hits in 83 CRISPR screens"/>
</dbReference>
<dbReference type="ChiTaRS" id="Prdm15">
    <property type="organism name" value="mouse"/>
</dbReference>
<dbReference type="PRO" id="PR:E9Q8T2"/>
<dbReference type="Proteomes" id="UP000000589">
    <property type="component" value="Chromosome 16"/>
</dbReference>
<dbReference type="RNAct" id="E9Q8T2">
    <property type="molecule type" value="protein"/>
</dbReference>
<dbReference type="Bgee" id="ENSMUSG00000014039">
    <property type="expression patterns" value="Expressed in superior cervical ganglion and 242 other cell types or tissues"/>
</dbReference>
<dbReference type="ExpressionAtlas" id="E9Q8T2">
    <property type="expression patterns" value="baseline and differential"/>
</dbReference>
<dbReference type="GO" id="GO:0016604">
    <property type="term" value="C:nuclear body"/>
    <property type="evidence" value="ECO:0007669"/>
    <property type="project" value="Ensembl"/>
</dbReference>
<dbReference type="GO" id="GO:0005634">
    <property type="term" value="C:nucleus"/>
    <property type="evidence" value="ECO:0000314"/>
    <property type="project" value="UniProtKB"/>
</dbReference>
<dbReference type="GO" id="GO:0008168">
    <property type="term" value="F:methyltransferase activity"/>
    <property type="evidence" value="ECO:0007669"/>
    <property type="project" value="UniProtKB-KW"/>
</dbReference>
<dbReference type="GO" id="GO:1990841">
    <property type="term" value="F:promoter-specific chromatin binding"/>
    <property type="evidence" value="ECO:0000314"/>
    <property type="project" value="UniProtKB"/>
</dbReference>
<dbReference type="GO" id="GO:0000978">
    <property type="term" value="F:RNA polymerase II cis-regulatory region sequence-specific DNA binding"/>
    <property type="evidence" value="ECO:0000314"/>
    <property type="project" value="UniProtKB"/>
</dbReference>
<dbReference type="GO" id="GO:0008270">
    <property type="term" value="F:zinc ion binding"/>
    <property type="evidence" value="ECO:0007669"/>
    <property type="project" value="UniProtKB-KW"/>
</dbReference>
<dbReference type="GO" id="GO:0032259">
    <property type="term" value="P:methylation"/>
    <property type="evidence" value="ECO:0007669"/>
    <property type="project" value="UniProtKB-KW"/>
</dbReference>
<dbReference type="GO" id="GO:0043409">
    <property type="term" value="P:negative regulation of MAPK cascade"/>
    <property type="evidence" value="ECO:0000315"/>
    <property type="project" value="UniProtKB"/>
</dbReference>
<dbReference type="GO" id="GO:0090263">
    <property type="term" value="P:positive regulation of canonical Wnt signaling pathway"/>
    <property type="evidence" value="ECO:0000315"/>
    <property type="project" value="UniProtKB"/>
</dbReference>
<dbReference type="GO" id="GO:0045944">
    <property type="term" value="P:positive regulation of transcription by RNA polymerase II"/>
    <property type="evidence" value="ECO:0000314"/>
    <property type="project" value="UniProtKB"/>
</dbReference>
<dbReference type="GO" id="GO:2000035">
    <property type="term" value="P:regulation of stem cell division"/>
    <property type="evidence" value="ECO:0000315"/>
    <property type="project" value="UniProtKB"/>
</dbReference>
<dbReference type="CDD" id="cd19199">
    <property type="entry name" value="PR-SET_PRDM15"/>
    <property type="match status" value="1"/>
</dbReference>
<dbReference type="FunFam" id="3.30.160.60:FF:004086">
    <property type="match status" value="1"/>
</dbReference>
<dbReference type="FunFam" id="2.170.270.10:FF:000007">
    <property type="entry name" value="PR domain zinc finger protein 10"/>
    <property type="match status" value="1"/>
</dbReference>
<dbReference type="FunFam" id="3.30.160.60:FF:000593">
    <property type="entry name" value="PR domain zinc finger protein 15"/>
    <property type="match status" value="1"/>
</dbReference>
<dbReference type="FunFam" id="3.30.160.60:FF:000603">
    <property type="entry name" value="PR domain zinc finger protein 15"/>
    <property type="match status" value="1"/>
</dbReference>
<dbReference type="FunFam" id="3.30.160.60:FF:000937">
    <property type="entry name" value="PR domain zinc finger protein 15"/>
    <property type="match status" value="1"/>
</dbReference>
<dbReference type="FunFam" id="3.30.160.60:FF:003229">
    <property type="entry name" value="PR/SET domain 15"/>
    <property type="match status" value="1"/>
</dbReference>
<dbReference type="Gene3D" id="3.30.160.60">
    <property type="entry name" value="Classic Zinc Finger"/>
    <property type="match status" value="11"/>
</dbReference>
<dbReference type="Gene3D" id="2.170.270.10">
    <property type="entry name" value="SET domain"/>
    <property type="match status" value="1"/>
</dbReference>
<dbReference type="InterPro" id="IPR044409">
    <property type="entry name" value="PRDM15_PR-SET"/>
</dbReference>
<dbReference type="InterPro" id="IPR001214">
    <property type="entry name" value="SET_dom"/>
</dbReference>
<dbReference type="InterPro" id="IPR046341">
    <property type="entry name" value="SET_dom_sf"/>
</dbReference>
<dbReference type="InterPro" id="IPR036236">
    <property type="entry name" value="Znf_C2H2_sf"/>
</dbReference>
<dbReference type="InterPro" id="IPR013087">
    <property type="entry name" value="Znf_C2H2_type"/>
</dbReference>
<dbReference type="PANTHER" id="PTHR24408">
    <property type="entry name" value="ZINC FINGER PROTEIN"/>
    <property type="match status" value="1"/>
</dbReference>
<dbReference type="PANTHER" id="PTHR24408:SF34">
    <property type="entry name" value="ZINC FINGER PROTEIN 672-RELATED"/>
    <property type="match status" value="1"/>
</dbReference>
<dbReference type="Pfam" id="PF21549">
    <property type="entry name" value="PRDM2_PR"/>
    <property type="match status" value="1"/>
</dbReference>
<dbReference type="Pfam" id="PF00096">
    <property type="entry name" value="zf-C2H2"/>
    <property type="match status" value="8"/>
</dbReference>
<dbReference type="Pfam" id="PF13894">
    <property type="entry name" value="zf-C2H2_4"/>
    <property type="match status" value="1"/>
</dbReference>
<dbReference type="Pfam" id="PF23573">
    <property type="entry name" value="zf-C2H2_PRDM15"/>
    <property type="match status" value="1"/>
</dbReference>
<dbReference type="SMART" id="SM00355">
    <property type="entry name" value="ZnF_C2H2"/>
    <property type="match status" value="17"/>
</dbReference>
<dbReference type="SUPFAM" id="SSF57667">
    <property type="entry name" value="beta-beta-alpha zinc fingers"/>
    <property type="match status" value="7"/>
</dbReference>
<dbReference type="PROSITE" id="PS50280">
    <property type="entry name" value="SET"/>
    <property type="match status" value="1"/>
</dbReference>
<dbReference type="PROSITE" id="PS00028">
    <property type="entry name" value="ZINC_FINGER_C2H2_1"/>
    <property type="match status" value="16"/>
</dbReference>
<dbReference type="PROSITE" id="PS50157">
    <property type="entry name" value="ZINC_FINGER_C2H2_2"/>
    <property type="match status" value="15"/>
</dbReference>
<organism>
    <name type="scientific">Mus musculus</name>
    <name type="common">Mouse</name>
    <dbReference type="NCBI Taxonomy" id="10090"/>
    <lineage>
        <taxon>Eukaryota</taxon>
        <taxon>Metazoa</taxon>
        <taxon>Chordata</taxon>
        <taxon>Craniata</taxon>
        <taxon>Vertebrata</taxon>
        <taxon>Euteleostomi</taxon>
        <taxon>Mammalia</taxon>
        <taxon>Eutheria</taxon>
        <taxon>Euarchontoglires</taxon>
        <taxon>Glires</taxon>
        <taxon>Rodentia</taxon>
        <taxon>Myomorpha</taxon>
        <taxon>Muroidea</taxon>
        <taxon>Muridae</taxon>
        <taxon>Murinae</taxon>
        <taxon>Mus</taxon>
        <taxon>Mus</taxon>
    </lineage>
</organism>
<accession>E9Q8T2</accession>
<accession>E9Q6A1</accession>
<accession>Q3UML7</accession>
<proteinExistence type="evidence at protein level"/>
<reference key="1">
    <citation type="journal article" date="2005" name="Science">
        <title>The transcriptional landscape of the mammalian genome.</title>
        <authorList>
            <person name="Carninci P."/>
            <person name="Kasukawa T."/>
            <person name="Katayama S."/>
            <person name="Gough J."/>
            <person name="Frith M.C."/>
            <person name="Maeda N."/>
            <person name="Oyama R."/>
            <person name="Ravasi T."/>
            <person name="Lenhard B."/>
            <person name="Wells C."/>
            <person name="Kodzius R."/>
            <person name="Shimokawa K."/>
            <person name="Bajic V.B."/>
            <person name="Brenner S.E."/>
            <person name="Batalov S."/>
            <person name="Forrest A.R."/>
            <person name="Zavolan M."/>
            <person name="Davis M.J."/>
            <person name="Wilming L.G."/>
            <person name="Aidinis V."/>
            <person name="Allen J.E."/>
            <person name="Ambesi-Impiombato A."/>
            <person name="Apweiler R."/>
            <person name="Aturaliya R.N."/>
            <person name="Bailey T.L."/>
            <person name="Bansal M."/>
            <person name="Baxter L."/>
            <person name="Beisel K.W."/>
            <person name="Bersano T."/>
            <person name="Bono H."/>
            <person name="Chalk A.M."/>
            <person name="Chiu K.P."/>
            <person name="Choudhary V."/>
            <person name="Christoffels A."/>
            <person name="Clutterbuck D.R."/>
            <person name="Crowe M.L."/>
            <person name="Dalla E."/>
            <person name="Dalrymple B.P."/>
            <person name="de Bono B."/>
            <person name="Della Gatta G."/>
            <person name="di Bernardo D."/>
            <person name="Down T."/>
            <person name="Engstrom P."/>
            <person name="Fagiolini M."/>
            <person name="Faulkner G."/>
            <person name="Fletcher C.F."/>
            <person name="Fukushima T."/>
            <person name="Furuno M."/>
            <person name="Futaki S."/>
            <person name="Gariboldi M."/>
            <person name="Georgii-Hemming P."/>
            <person name="Gingeras T.R."/>
            <person name="Gojobori T."/>
            <person name="Green R.E."/>
            <person name="Gustincich S."/>
            <person name="Harbers M."/>
            <person name="Hayashi Y."/>
            <person name="Hensch T.K."/>
            <person name="Hirokawa N."/>
            <person name="Hill D."/>
            <person name="Huminiecki L."/>
            <person name="Iacono M."/>
            <person name="Ikeo K."/>
            <person name="Iwama A."/>
            <person name="Ishikawa T."/>
            <person name="Jakt M."/>
            <person name="Kanapin A."/>
            <person name="Katoh M."/>
            <person name="Kawasawa Y."/>
            <person name="Kelso J."/>
            <person name="Kitamura H."/>
            <person name="Kitano H."/>
            <person name="Kollias G."/>
            <person name="Krishnan S.P."/>
            <person name="Kruger A."/>
            <person name="Kummerfeld S.K."/>
            <person name="Kurochkin I.V."/>
            <person name="Lareau L.F."/>
            <person name="Lazarevic D."/>
            <person name="Lipovich L."/>
            <person name="Liu J."/>
            <person name="Liuni S."/>
            <person name="McWilliam S."/>
            <person name="Madan Babu M."/>
            <person name="Madera M."/>
            <person name="Marchionni L."/>
            <person name="Matsuda H."/>
            <person name="Matsuzawa S."/>
            <person name="Miki H."/>
            <person name="Mignone F."/>
            <person name="Miyake S."/>
            <person name="Morris K."/>
            <person name="Mottagui-Tabar S."/>
            <person name="Mulder N."/>
            <person name="Nakano N."/>
            <person name="Nakauchi H."/>
            <person name="Ng P."/>
            <person name="Nilsson R."/>
            <person name="Nishiguchi S."/>
            <person name="Nishikawa S."/>
            <person name="Nori F."/>
            <person name="Ohara O."/>
            <person name="Okazaki Y."/>
            <person name="Orlando V."/>
            <person name="Pang K.C."/>
            <person name="Pavan W.J."/>
            <person name="Pavesi G."/>
            <person name="Pesole G."/>
            <person name="Petrovsky N."/>
            <person name="Piazza S."/>
            <person name="Reed J."/>
            <person name="Reid J.F."/>
            <person name="Ring B.Z."/>
            <person name="Ringwald M."/>
            <person name="Rost B."/>
            <person name="Ruan Y."/>
            <person name="Salzberg S.L."/>
            <person name="Sandelin A."/>
            <person name="Schneider C."/>
            <person name="Schoenbach C."/>
            <person name="Sekiguchi K."/>
            <person name="Semple C.A."/>
            <person name="Seno S."/>
            <person name="Sessa L."/>
            <person name="Sheng Y."/>
            <person name="Shibata Y."/>
            <person name="Shimada H."/>
            <person name="Shimada K."/>
            <person name="Silva D."/>
            <person name="Sinclair B."/>
            <person name="Sperling S."/>
            <person name="Stupka E."/>
            <person name="Sugiura K."/>
            <person name="Sultana R."/>
            <person name="Takenaka Y."/>
            <person name="Taki K."/>
            <person name="Tammoja K."/>
            <person name="Tan S.L."/>
            <person name="Tang S."/>
            <person name="Taylor M.S."/>
            <person name="Tegner J."/>
            <person name="Teichmann S.A."/>
            <person name="Ueda H.R."/>
            <person name="van Nimwegen E."/>
            <person name="Verardo R."/>
            <person name="Wei C.L."/>
            <person name="Yagi K."/>
            <person name="Yamanishi H."/>
            <person name="Zabarovsky E."/>
            <person name="Zhu S."/>
            <person name="Zimmer A."/>
            <person name="Hide W."/>
            <person name="Bult C."/>
            <person name="Grimmond S.M."/>
            <person name="Teasdale R.D."/>
            <person name="Liu E.T."/>
            <person name="Brusic V."/>
            <person name="Quackenbush J."/>
            <person name="Wahlestedt C."/>
            <person name="Mattick J.S."/>
            <person name="Hume D.A."/>
            <person name="Kai C."/>
            <person name="Sasaki D."/>
            <person name="Tomaru Y."/>
            <person name="Fukuda S."/>
            <person name="Kanamori-Katayama M."/>
            <person name="Suzuki M."/>
            <person name="Aoki J."/>
            <person name="Arakawa T."/>
            <person name="Iida J."/>
            <person name="Imamura K."/>
            <person name="Itoh M."/>
            <person name="Kato T."/>
            <person name="Kawaji H."/>
            <person name="Kawagashira N."/>
            <person name="Kawashima T."/>
            <person name="Kojima M."/>
            <person name="Kondo S."/>
            <person name="Konno H."/>
            <person name="Nakano K."/>
            <person name="Ninomiya N."/>
            <person name="Nishio T."/>
            <person name="Okada M."/>
            <person name="Plessy C."/>
            <person name="Shibata K."/>
            <person name="Shiraki T."/>
            <person name="Suzuki S."/>
            <person name="Tagami M."/>
            <person name="Waki K."/>
            <person name="Watahiki A."/>
            <person name="Okamura-Oho Y."/>
            <person name="Suzuki H."/>
            <person name="Kawai J."/>
            <person name="Hayashizaki Y."/>
        </authorList>
    </citation>
    <scope>NUCLEOTIDE SEQUENCE [LARGE SCALE MRNA] (ISOFORM 2)</scope>
    <source>
        <tissue>Lung</tissue>
    </source>
</reference>
<reference key="2">
    <citation type="journal article" date="2009" name="PLoS Biol.">
        <title>Lineage-specific biology revealed by a finished genome assembly of the mouse.</title>
        <authorList>
            <person name="Church D.M."/>
            <person name="Goodstadt L."/>
            <person name="Hillier L.W."/>
            <person name="Zody M.C."/>
            <person name="Goldstein S."/>
            <person name="She X."/>
            <person name="Bult C.J."/>
            <person name="Agarwala R."/>
            <person name="Cherry J.L."/>
            <person name="DiCuccio M."/>
            <person name="Hlavina W."/>
            <person name="Kapustin Y."/>
            <person name="Meric P."/>
            <person name="Maglott D."/>
            <person name="Birtle Z."/>
            <person name="Marques A.C."/>
            <person name="Graves T."/>
            <person name="Zhou S."/>
            <person name="Teague B."/>
            <person name="Potamousis K."/>
            <person name="Churas C."/>
            <person name="Place M."/>
            <person name="Herschleb J."/>
            <person name="Runnheim R."/>
            <person name="Forrest D."/>
            <person name="Amos-Landgraf J."/>
            <person name="Schwartz D.C."/>
            <person name="Cheng Z."/>
            <person name="Lindblad-Toh K."/>
            <person name="Eichler E.E."/>
            <person name="Ponting C.P."/>
        </authorList>
    </citation>
    <scope>NUCLEOTIDE SEQUENCE [LARGE SCALE GENOMIC DNA]</scope>
    <source>
        <strain>C57BL/6J</strain>
    </source>
</reference>
<reference key="3">
    <citation type="journal article" date="2017" name="Nat. Genet.">
        <title>PRDM15 safeguards naive pluripotency by transcriptionally regulating WNT and MAPK-ERK signaling.</title>
        <authorList>
            <person name="Mzoughi S."/>
            <person name="Zhang J."/>
            <person name="Hequet D."/>
            <person name="Teo S.X."/>
            <person name="Fang H."/>
            <person name="Xing Q.R."/>
            <person name="Bezzi M."/>
            <person name="Seah M.K.Y."/>
            <person name="Ong S.L.M."/>
            <person name="Shin E.M."/>
            <person name="Wollmann H."/>
            <person name="Wong E.S.M."/>
            <person name="Al-Haddawi M."/>
            <person name="Stewart C.L."/>
            <person name="Tergaonkar V."/>
            <person name="Loh Y.H."/>
            <person name="Dunn N.R."/>
            <person name="Messerschmidt D.M."/>
            <person name="Guccione E."/>
        </authorList>
    </citation>
    <scope>FUNCTION</scope>
    <scope>SUBCELLULAR LOCATION</scope>
    <scope>TISSUE SPECIFICITY</scope>
    <scope>DISRUPTION PHENOTYPE</scope>
</reference>
<comment type="function">
    <text evidence="5">Sequence-specific DNA-binding transcriptional regulator. Plays a role as a molecular node in a transcriptional network regulating embryonic development and cell fate decision. Stimulates the expression of upstream key transcriptional activators and repressors of the Wnt/beta-catenin and MAPK/ERK pathways, respectively, that are essential for naive pluripotency and self-renewal maintenance of embryonic stem cells (ESCs). Specifically promotes SPRY1 and RSPO1 transcription activation through recognition and direct binding of a specific DNA sequence in their promoter regions. Also plays a role in induced pluripotent stem cells (iPSCs) reprogramming. Involved in early embryo development.</text>
</comment>
<comment type="subcellular location">
    <subcellularLocation>
        <location evidence="5">Nucleus</location>
    </subcellularLocation>
</comment>
<comment type="alternative products">
    <event type="alternative splicing"/>
    <isoform>
        <id>E9Q8T2-1</id>
        <name>1</name>
        <sequence type="displayed"/>
    </isoform>
    <isoform>
        <id>E9Q8T2-2</id>
        <name>2</name>
        <sequence type="described" ref="VSP_059647"/>
    </isoform>
</comment>
<comment type="tissue specificity">
    <text evidence="5">Expressed in embryonic stem cells (ESCs) (at protein level).</text>
</comment>
<comment type="disruption phenotype">
    <text evidence="5">Mice die before birth and show early postimplantation developmental defect. Display reduced embryonic stem cells (ESCs) proliferation and self-renewal capacity. Show altered transcription of naive pluripotency and self-renewal modulator genes.</text>
</comment>
<protein>
    <recommendedName>
        <fullName evidence="7">PR domain zinc finger protein 15</fullName>
        <ecNumber evidence="7">2.1.1.-</ecNumber>
    </recommendedName>
    <alternativeName>
        <fullName evidence="7">PR domain-containing protein 15</fullName>
    </alternativeName>
</protein>
<name>PRD15_MOUSE</name>
<evidence type="ECO:0000250" key="1">
    <source>
        <dbReference type="UniProtKB" id="P57071"/>
    </source>
</evidence>
<evidence type="ECO:0000255" key="2">
    <source>
        <dbReference type="PROSITE-ProRule" id="PRU00042"/>
    </source>
</evidence>
<evidence type="ECO:0000255" key="3">
    <source>
        <dbReference type="PROSITE-ProRule" id="PRU00190"/>
    </source>
</evidence>
<evidence type="ECO:0000256" key="4">
    <source>
        <dbReference type="SAM" id="MobiDB-lite"/>
    </source>
</evidence>
<evidence type="ECO:0000269" key="5">
    <source>
    </source>
</evidence>
<evidence type="ECO:0000303" key="6">
    <source>
    </source>
</evidence>
<evidence type="ECO:0000305" key="7"/>
<evidence type="ECO:0000312" key="8">
    <source>
        <dbReference type="MGI" id="MGI:1930121"/>
    </source>
</evidence>
<sequence>MCPPTIWEKGGQVGARWSLRAPEVSAMAEDGSEEIMFIWCEDCSQYHDSECPELGPVVMVKDSFVLSRARSSLPSNLEIRRLDDGAEGVFAVTQLVKRTQFGPFESRRVAKWEKESAFPLKVFQKDGHPVCFDTSNEDDCNWMMLVRPALEPGHQNLTAYQHGSDVYFTTSKDIPAGTELRVWYAAFYAKKMDKPMLKQACSSVQAAGTPEPSVSVEPERGQWVCKVCSNTFLELQLLNEHLLGHLEQAKSLPAGGQQHEAASEKEPDAPRMEPPTAAESKSIQSVMVTKEPKKKPRRGRKPKASKVEQPLVIIKDKEPSEHVAEIITEIPPDEPVSATPDERIMELVLGKLAAPTNEASSVPKFPHHPSSTIALKRGLVLSSRHGVRRKLVRQLGEHKRIHQCGTCSKVFQNSSNLSRHVRSHGECAHGDKLFKCEECSKLFSRKESLKQHVSYKHSRNEVDGEYRYRCGSCGKTFRMESALEFHNCRTDDKTFQCEMCFRFFSTNSNLSKHKKKHGDKKFACEVCSKMFYRKDVMLDHQRRHLDGVRRVKREDLEASGESLVRYKKEPSGCPVCGKVFSCRSNMNKHLLTHGDKKYTCEICGRKFFRVDVLRDHIHVHFKDIALMDDHQREEFIGKIGISSEENDDNSDESADSEPHKYSCKRCQLTFGRGKEYLKHIMEVHKEKGHGCSICHRRFALKATYHAHMVIHRENLPDPNVQKYIHPCEICGRIFNSIGNLERHKLIHTGVKSHACEQCGKSFARKDMLKEHMRVHDNIREYLCAECGKGMKTKHALRHHMKLHKGIKEYECKECHRKFAQKVNMLKHYKRHTGIKDFMCELCGKTFSERNTMETHKLIHTVGKQWTCSVCDKKYVTEYMLQKHVQLTHDKVEAQSCQLCGTKVSTRASMSRHMRRKHPEVLAVRIDDLDHLPETTTIDASSIGIVQPALGLEQEELAEGKHGKAAKRSHKRKQKPEEEAGAPVPEDTTFSEYPEKEPEFTGSVGDETNSAVQSIQQVVVTLGDPNVTAPSSSVGLTNITVTPITTAAGTQFTNLQPVAVGHLTNPDRQLQLDNSILTVTFDTVSGSAMLHNRQNDVQIHPQPEATNPQSVAHFINLTTLVNSITPLGNQLSEQHPLTWRAVPQTDVLQPPQAPAAPQQAVQPQVQNEQQQMYSY</sequence>
<gene>
    <name evidence="8" type="primary">Prdm15</name>
</gene>
<keyword id="KW-0010">Activator</keyword>
<keyword id="KW-0025">Alternative splicing</keyword>
<keyword id="KW-0217">Developmental protein</keyword>
<keyword id="KW-0238">DNA-binding</keyword>
<keyword id="KW-1017">Isopeptide bond</keyword>
<keyword id="KW-0479">Metal-binding</keyword>
<keyword id="KW-0489">Methyltransferase</keyword>
<keyword id="KW-0539">Nucleus</keyword>
<keyword id="KW-1185">Reference proteome</keyword>
<keyword id="KW-0677">Repeat</keyword>
<keyword id="KW-0678">Repressor</keyword>
<keyword id="KW-0949">S-adenosyl-L-methionine</keyword>
<keyword id="KW-0804">Transcription</keyword>
<keyword id="KW-0805">Transcription regulation</keyword>
<keyword id="KW-0808">Transferase</keyword>
<keyword id="KW-0832">Ubl conjugation</keyword>
<keyword id="KW-0862">Zinc</keyword>
<keyword id="KW-0863">Zinc-finger</keyword>